<reference key="1">
    <citation type="submission" date="2004-11" db="EMBL/GenBank/DDBJ databases">
        <authorList>
            <consortium name="The German cDNA consortium"/>
        </authorList>
    </citation>
    <scope>NUCLEOTIDE SEQUENCE [LARGE SCALE MRNA]</scope>
    <source>
        <tissue>Kidney</tissue>
    </source>
</reference>
<gene>
    <name type="primary">TFCP2L1</name>
</gene>
<feature type="chain" id="PRO_0000228008" description="Transcription factor CP2-like protein 1">
    <location>
        <begin position="1"/>
        <end position="457"/>
    </location>
</feature>
<feature type="domain" description="Grh/CP2 DB" evidence="3">
    <location>
        <begin position="43"/>
        <end position="280"/>
    </location>
</feature>
<feature type="region of interest" description="Mediate transcriptional repression">
    <location>
        <begin position="1"/>
        <end position="52"/>
    </location>
</feature>
<feature type="region of interest" description="Disordered" evidence="4">
    <location>
        <begin position="219"/>
        <end position="245"/>
    </location>
</feature>
<feature type="region of interest" description="SAM2-like domain" evidence="2">
    <location>
        <begin position="261"/>
        <end position="365"/>
    </location>
</feature>
<feature type="region of interest" description="Disordered" evidence="4">
    <location>
        <begin position="271"/>
        <end position="301"/>
    </location>
</feature>
<feature type="compositionally biased region" description="Basic and acidic residues" evidence="4">
    <location>
        <begin position="221"/>
        <end position="245"/>
    </location>
</feature>
<feature type="compositionally biased region" description="Polar residues" evidence="4">
    <location>
        <begin position="271"/>
        <end position="281"/>
    </location>
</feature>
<proteinExistence type="evidence at transcript level"/>
<protein>
    <recommendedName>
        <fullName>Transcription factor CP2-like protein 1</fullName>
    </recommendedName>
</protein>
<evidence type="ECO:0000250" key="1">
    <source>
        <dbReference type="UniProtKB" id="Q3UNW5"/>
    </source>
</evidence>
<evidence type="ECO:0000250" key="2">
    <source>
        <dbReference type="UniProtKB" id="Q9NZI6"/>
    </source>
</evidence>
<evidence type="ECO:0000255" key="3">
    <source>
        <dbReference type="PROSITE-ProRule" id="PRU01313"/>
    </source>
</evidence>
<evidence type="ECO:0000256" key="4">
    <source>
        <dbReference type="SAM" id="MobiDB-lite"/>
    </source>
</evidence>
<evidence type="ECO:0000305" key="5"/>
<keyword id="KW-0238">DNA-binding</keyword>
<keyword id="KW-0539">Nucleus</keyword>
<keyword id="KW-1185">Reference proteome</keyword>
<keyword id="KW-0804">Transcription</keyword>
<keyword id="KW-0805">Transcription regulation</keyword>
<dbReference type="EMBL" id="CR858843">
    <property type="protein sequence ID" value="CAH91044.1"/>
    <property type="molecule type" value="mRNA"/>
</dbReference>
<dbReference type="RefSeq" id="NP_001125604.1">
    <property type="nucleotide sequence ID" value="NM_001132132.1"/>
</dbReference>
<dbReference type="SMR" id="Q5RB16"/>
<dbReference type="FunCoup" id="Q5RB16">
    <property type="interactions" value="587"/>
</dbReference>
<dbReference type="STRING" id="9601.ENSPPYP00000014259"/>
<dbReference type="GeneID" id="100172521"/>
<dbReference type="KEGG" id="pon:100172521"/>
<dbReference type="CTD" id="29842"/>
<dbReference type="eggNOG" id="KOG4091">
    <property type="taxonomic scope" value="Eukaryota"/>
</dbReference>
<dbReference type="InParanoid" id="Q5RB16"/>
<dbReference type="OrthoDB" id="9996779at2759"/>
<dbReference type="Proteomes" id="UP000001595">
    <property type="component" value="Unplaced"/>
</dbReference>
<dbReference type="GO" id="GO:0005634">
    <property type="term" value="C:nucleus"/>
    <property type="evidence" value="ECO:0007669"/>
    <property type="project" value="UniProtKB-SubCell"/>
</dbReference>
<dbReference type="GO" id="GO:0001228">
    <property type="term" value="F:DNA-binding transcription activator activity, RNA polymerase II-specific"/>
    <property type="evidence" value="ECO:0007669"/>
    <property type="project" value="TreeGrafter"/>
</dbReference>
<dbReference type="GO" id="GO:0000978">
    <property type="term" value="F:RNA polymerase II cis-regulatory region sequence-specific DNA binding"/>
    <property type="evidence" value="ECO:0007669"/>
    <property type="project" value="TreeGrafter"/>
</dbReference>
<dbReference type="CDD" id="cd09590">
    <property type="entry name" value="SAM_LBP9"/>
    <property type="match status" value="1"/>
</dbReference>
<dbReference type="FunFam" id="1.10.150.50:FF:000022">
    <property type="entry name" value="Transcription factor CP2 like 1"/>
    <property type="match status" value="1"/>
</dbReference>
<dbReference type="Gene3D" id="1.10.150.50">
    <property type="entry name" value="Transcription Factor, Ets-1"/>
    <property type="match status" value="1"/>
</dbReference>
<dbReference type="InterPro" id="IPR007604">
    <property type="entry name" value="CP2"/>
</dbReference>
<dbReference type="InterPro" id="IPR013761">
    <property type="entry name" value="SAM/pointed_sf"/>
</dbReference>
<dbReference type="InterPro" id="IPR041418">
    <property type="entry name" value="SAM_3"/>
</dbReference>
<dbReference type="InterPro" id="IPR040167">
    <property type="entry name" value="TF_CP2-like"/>
</dbReference>
<dbReference type="InterPro" id="IPR037598">
    <property type="entry name" value="TFCP2L1_SAM"/>
</dbReference>
<dbReference type="PANTHER" id="PTHR11037">
    <property type="entry name" value="TRANSCRIPTION FACTOR CP2"/>
    <property type="match status" value="1"/>
</dbReference>
<dbReference type="PANTHER" id="PTHR11037:SF18">
    <property type="entry name" value="TRANSCRIPTION FACTOR CP2-LIKE PROTEIN 1"/>
    <property type="match status" value="1"/>
</dbReference>
<dbReference type="Pfam" id="PF04516">
    <property type="entry name" value="CP2"/>
    <property type="match status" value="1"/>
</dbReference>
<dbReference type="Pfam" id="PF25416">
    <property type="entry name" value="GRHL1_C"/>
    <property type="match status" value="1"/>
</dbReference>
<dbReference type="Pfam" id="PF18016">
    <property type="entry name" value="SAM_3"/>
    <property type="match status" value="1"/>
</dbReference>
<dbReference type="SUPFAM" id="SSF47769">
    <property type="entry name" value="SAM/Pointed domain"/>
    <property type="match status" value="1"/>
</dbReference>
<dbReference type="PROSITE" id="PS51968">
    <property type="entry name" value="GRH_CP2_DB"/>
    <property type="match status" value="1"/>
</dbReference>
<organism>
    <name type="scientific">Pongo abelii</name>
    <name type="common">Sumatran orangutan</name>
    <name type="synonym">Pongo pygmaeus abelii</name>
    <dbReference type="NCBI Taxonomy" id="9601"/>
    <lineage>
        <taxon>Eukaryota</taxon>
        <taxon>Metazoa</taxon>
        <taxon>Chordata</taxon>
        <taxon>Craniata</taxon>
        <taxon>Vertebrata</taxon>
        <taxon>Euteleostomi</taxon>
        <taxon>Mammalia</taxon>
        <taxon>Eutheria</taxon>
        <taxon>Euarchontoglires</taxon>
        <taxon>Primates</taxon>
        <taxon>Haplorrhini</taxon>
        <taxon>Catarrhini</taxon>
        <taxon>Hominidae</taxon>
        <taxon>Pongo</taxon>
    </lineage>
</organism>
<name>TF2L1_PONAB</name>
<accession>Q5RB16</accession>
<comment type="function">
    <text evidence="1">Transcription factor that facilitates establishment and maintenance of pluripotency in embryonic stem cells (ESCs) (By similarity). With KLF2, acts as the major effector of self-renewal that mediates induction of pluripotency downstream of LIF/STAT3 and Wnt/beta-catenin signaling (By similarity). Required for normal duct development in the salivary gland and kidney (By similarity). Coordinates the development of the kidney collecting ducts intercalated (IC) and principal (PC) cells, which regulate acid-base and salt-water homeostasis, respectively (By similarity). Regulates the expression of IC genes including subunits B1 and D2 of the V-ATPase complex, OXGR1, CA12, SLC4A1, AQP6 and IC-specific transcription factor FOXI1 (By similarity). Also regulates the expression of JAG1 and subsequent notch signaling in the collecting duct (By similarity). JAG1 initiates notch signaling in PCs but inhibits notch signaling in ICs (By similarity). Acts as a transcriptional suppressor that may suppress UBP1-mediated transcriptional activation (By similarity). Modulates the placental expression of CYP11A1 (By similarity).</text>
</comment>
<comment type="subunit">
    <text evidence="1 2">Forms homohexamers via its SAM-like domain (By similarity). Interacts with MTA1; which is indispensable for TFCP2L1-mediated self-renewal-promoting effect and endoderm-inhibiting action (By similarity).</text>
</comment>
<comment type="subcellular location">
    <subcellularLocation>
        <location evidence="2">Nucleus</location>
    </subcellularLocation>
</comment>
<comment type="domain">
    <text evidence="1 2">The Grh/CP2 DB domain is required for direct DNA-binding (By similarity). The Grh/CP2 DB domain is essential to maintain the undifferentiated state of embryonic stem cells (By similarity).</text>
</comment>
<comment type="domain">
    <text evidence="2">The SAM-like domain is required for homohexamerization (By similarity).</text>
</comment>
<comment type="similarity">
    <text evidence="5">Belongs to the grh/CP2 family. CP2 subfamily.</text>
</comment>
<sequence>MLFWHTQPEHYNQHNSGSYLRDVLALPIFKQEEPQLSPENEARLPPLQYVLCAATSPAVKLHEETLTYLNQGQSYEIRLLENRKLGDFQDLNTKYVKSIIRVVFNDRRLQYTEHQQLEGWRWSRPGDRILDIDIPLSVGILDPRASPTQLNAVEFLWDPAKRASAFIQVHCISTEFTPRKHGGEKGVPFRVQIDTFKQNENGEYTEHLHSASCQIKVFKPKGADRKQETDREKMEKRTAQEKEKYQPSYETTILTECSPWPDVAYQVNSAPSPSYNGSPNSFGLGEGNASPTHPVEALPVGSDHLLPSASIQDAQQWLHRNRFSQFCRLFASFSGADLLKMSRDDLVQICGPADGIRLFNAIKGRNVRPKMTIYVCQELEQNRVPLQQKRDGSGDSNLCVYHAIFLEELTTLDLIEKIANLYSISPQHIHRVYRQGPTGIHVVVSNELRAMTATTSS</sequence>